<feature type="chain" id="PRO_0000246691" description="Putative DNA (cytosine-5)-methyltransferase CMT1">
    <location>
        <begin position="1"/>
        <end position="791"/>
    </location>
</feature>
<feature type="domain" description="BAH" evidence="4">
    <location>
        <begin position="79"/>
        <end position="199"/>
    </location>
</feature>
<feature type="domain" description="SAM-dependent MTase C5-type" evidence="5">
    <location>
        <begin position="225"/>
        <end position="768"/>
    </location>
</feature>
<feature type="domain" description="Chromo" evidence="3">
    <location>
        <begin position="339"/>
        <end position="404"/>
    </location>
</feature>
<feature type="region of interest" description="Disordered" evidence="6">
    <location>
        <begin position="37"/>
        <end position="59"/>
    </location>
</feature>
<feature type="coiled-coil region" evidence="2">
    <location>
        <begin position="308"/>
        <end position="333"/>
    </location>
</feature>
<feature type="active site" evidence="5">
    <location>
        <position position="417"/>
    </location>
</feature>
<feature type="splice variant" id="VSP_019857" description="In isoform 2." evidence="8">
    <original>VTN</original>
    <variation>CCR</variation>
    <location>
        <begin position="568"/>
        <end position="570"/>
    </location>
</feature>
<feature type="splice variant" id="VSP_019858" description="In isoform 2." evidence="8">
    <location>
        <begin position="571"/>
        <end position="791"/>
    </location>
</feature>
<feature type="sequence variant" description="In strain: cv. Metz-0.">
    <original>D</original>
    <variation>G</variation>
    <location>
        <position position="148"/>
    </location>
</feature>
<feature type="sequence variant" description="In strain: cv. Kl-0.">
    <original>T</original>
    <variation>I</variation>
    <location>
        <position position="196"/>
    </location>
</feature>
<feature type="sequence variant" description="In strain: cv. No-0.">
    <original>A</original>
    <variation>T</variation>
    <location>
        <position position="198"/>
    </location>
</feature>
<feature type="sequence variant" description="In strain: cv. Metz-0.">
    <location>
        <begin position="249"/>
        <end position="791"/>
    </location>
</feature>
<feature type="sequence variant" description="In strain: cv. Landsberg erecta, cv. No-0 and cv. RLD.">
    <original>D</original>
    <variation>V</variation>
    <location>
        <position position="560"/>
    </location>
</feature>
<feature type="sequence variant" description="In strain: cv. Landsberg erecta, cv. No-0 and cv. RLD.">
    <location>
        <begin position="561"/>
        <end position="791"/>
    </location>
</feature>
<feature type="sequence variant" description="In strain: cv. Nd-1, Nd-0 and cv. Kl-0.">
    <original>F</original>
    <variation>C</variation>
    <location>
        <position position="604"/>
    </location>
</feature>
<evidence type="ECO:0000250" key="1"/>
<evidence type="ECO:0000255" key="2"/>
<evidence type="ECO:0000255" key="3">
    <source>
        <dbReference type="PROSITE-ProRule" id="PRU00053"/>
    </source>
</evidence>
<evidence type="ECO:0000255" key="4">
    <source>
        <dbReference type="PROSITE-ProRule" id="PRU00370"/>
    </source>
</evidence>
<evidence type="ECO:0000255" key="5">
    <source>
        <dbReference type="PROSITE-ProRule" id="PRU01016"/>
    </source>
</evidence>
<evidence type="ECO:0000256" key="6">
    <source>
        <dbReference type="SAM" id="MobiDB-lite"/>
    </source>
</evidence>
<evidence type="ECO:0000269" key="7">
    <source>
    </source>
</evidence>
<evidence type="ECO:0000303" key="8">
    <source>
    </source>
</evidence>
<evidence type="ECO:0000305" key="9"/>
<keyword id="KW-0025">Alternative splicing</keyword>
<keyword id="KW-0156">Chromatin regulator</keyword>
<keyword id="KW-0175">Coiled coil</keyword>
<keyword id="KW-0238">DNA-binding</keyword>
<keyword id="KW-0489">Methyltransferase</keyword>
<keyword id="KW-0539">Nucleus</keyword>
<keyword id="KW-1185">Reference proteome</keyword>
<keyword id="KW-0949">S-adenosyl-L-methionine</keyword>
<keyword id="KW-0804">Transcription</keyword>
<keyword id="KW-0805">Transcription regulation</keyword>
<keyword id="KW-0808">Transferase</keyword>
<comment type="function">
    <text evidence="1">May be involved in the CpXpG methylation and in gene silencing.</text>
</comment>
<comment type="catalytic activity">
    <reaction>
        <text>a 2'-deoxycytidine in DNA + S-adenosyl-L-methionine = a 5-methyl-2'-deoxycytidine in DNA + S-adenosyl-L-homocysteine + H(+)</text>
        <dbReference type="Rhea" id="RHEA:13681"/>
        <dbReference type="Rhea" id="RHEA-COMP:11369"/>
        <dbReference type="Rhea" id="RHEA-COMP:11370"/>
        <dbReference type="ChEBI" id="CHEBI:15378"/>
        <dbReference type="ChEBI" id="CHEBI:57856"/>
        <dbReference type="ChEBI" id="CHEBI:59789"/>
        <dbReference type="ChEBI" id="CHEBI:85452"/>
        <dbReference type="ChEBI" id="CHEBI:85454"/>
        <dbReference type="EC" id="2.1.1.37"/>
    </reaction>
</comment>
<comment type="subcellular location">
    <subcellularLocation>
        <location evidence="1">Nucleus</location>
    </subcellularLocation>
</comment>
<comment type="alternative products">
    <event type="alternative splicing"/>
    <isoform>
        <id>O49139-1</id>
        <name>1</name>
        <sequence type="displayed"/>
    </isoform>
    <isoform>
        <id>O49139-2</id>
        <name>2</name>
        <sequence type="described" ref="VSP_019857 VSP_019858"/>
    </isoform>
</comment>
<comment type="tissue specificity">
    <text evidence="7">Expressed in flowers. Not detected in leaves, roots, seedlings and plants prior formation of flower buds.</text>
</comment>
<comment type="miscellaneous">
    <molecule>Isoform 2</molecule>
    <text evidence="9">Alternative splice site used 50% of the time in cv. Columbia.</text>
</comment>
<comment type="similarity">
    <text evidence="5">Belongs to the class I-like SAM-binding methyltransferase superfamily. C5-methyltransferase family.</text>
</comment>
<comment type="caution">
    <text evidence="9">Could be the product of a pseudogene. The protein is severely truncated in several ecotypes and the gene even harbors a complete retrotransposon in 3 ecotypes.</text>
</comment>
<comment type="sequence caution" evidence="9">
    <conflict type="erroneous gene model prediction">
        <sequence resource="EMBL-CDS" id="AAA98912"/>
    </conflict>
</comment>
<reference key="1">
    <citation type="journal article" date="1998" name="Genetics">
        <title>A DNA methyltransferase homolog with a chromodomain exists in multiple polymorphic forms in Arabidopsis.</title>
        <authorList>
            <person name="Henikoff S."/>
            <person name="Comai L."/>
        </authorList>
    </citation>
    <scope>NUCLEOTIDE SEQUENCE [GENOMIC DNA / MRNA] (ISOFORMS 1 AND 2)</scope>
    <scope>TISSUE SPECIFICITY</scope>
    <source>
        <strain>cv. Columbia</strain>
        <strain>cv. Kl-0</strain>
        <strain>cv. Landsberg erecta</strain>
        <strain>cv. Metz-0</strain>
        <strain>cv. Nd-0</strain>
        <strain>cv. Nd-1</strain>
        <strain>cv. RLD</strain>
    </source>
</reference>
<reference key="2">
    <citation type="submission" date="1996-04" db="EMBL/GenBank/DDBJ databases">
        <title>A 37.5 Kb sequence from Arabidopsis thaliana chromosome I.</title>
        <authorList>
            <person name="Goodman H.M."/>
            <person name="Gallant P."/>
            <person name="Keifer-Higgins S."/>
            <person name="Rubenfield M."/>
            <person name="Church G.M."/>
        </authorList>
    </citation>
    <scope>NUCLEOTIDE SEQUENCE [GENOMIC DNA]</scope>
    <source>
        <strain>cv. Columbia</strain>
    </source>
</reference>
<reference key="3">
    <citation type="journal article" date="2000" name="Nature">
        <title>Sequence and analysis of chromosome 1 of the plant Arabidopsis thaliana.</title>
        <authorList>
            <person name="Theologis A."/>
            <person name="Ecker J.R."/>
            <person name="Palm C.J."/>
            <person name="Federspiel N.A."/>
            <person name="Kaul S."/>
            <person name="White O."/>
            <person name="Alonso J."/>
            <person name="Altafi H."/>
            <person name="Araujo R."/>
            <person name="Bowman C.L."/>
            <person name="Brooks S.Y."/>
            <person name="Buehler E."/>
            <person name="Chan A."/>
            <person name="Chao Q."/>
            <person name="Chen H."/>
            <person name="Cheuk R.F."/>
            <person name="Chin C.W."/>
            <person name="Chung M.K."/>
            <person name="Conn L."/>
            <person name="Conway A.B."/>
            <person name="Conway A.R."/>
            <person name="Creasy T.H."/>
            <person name="Dewar K."/>
            <person name="Dunn P."/>
            <person name="Etgu P."/>
            <person name="Feldblyum T.V."/>
            <person name="Feng J.-D."/>
            <person name="Fong B."/>
            <person name="Fujii C.Y."/>
            <person name="Gill J.E."/>
            <person name="Goldsmith A.D."/>
            <person name="Haas B."/>
            <person name="Hansen N.F."/>
            <person name="Hughes B."/>
            <person name="Huizar L."/>
            <person name="Hunter J.L."/>
            <person name="Jenkins J."/>
            <person name="Johnson-Hopson C."/>
            <person name="Khan S."/>
            <person name="Khaykin E."/>
            <person name="Kim C.J."/>
            <person name="Koo H.L."/>
            <person name="Kremenetskaia I."/>
            <person name="Kurtz D.B."/>
            <person name="Kwan A."/>
            <person name="Lam B."/>
            <person name="Langin-Hooper S."/>
            <person name="Lee A."/>
            <person name="Lee J.M."/>
            <person name="Lenz C.A."/>
            <person name="Li J.H."/>
            <person name="Li Y.-P."/>
            <person name="Lin X."/>
            <person name="Liu S.X."/>
            <person name="Liu Z.A."/>
            <person name="Luros J.S."/>
            <person name="Maiti R."/>
            <person name="Marziali A."/>
            <person name="Militscher J."/>
            <person name="Miranda M."/>
            <person name="Nguyen M."/>
            <person name="Nierman W.C."/>
            <person name="Osborne B.I."/>
            <person name="Pai G."/>
            <person name="Peterson J."/>
            <person name="Pham P.K."/>
            <person name="Rizzo M."/>
            <person name="Rooney T."/>
            <person name="Rowley D."/>
            <person name="Sakano H."/>
            <person name="Salzberg S.L."/>
            <person name="Schwartz J.R."/>
            <person name="Shinn P."/>
            <person name="Southwick A.M."/>
            <person name="Sun H."/>
            <person name="Tallon L.J."/>
            <person name="Tambunga G."/>
            <person name="Toriumi M.J."/>
            <person name="Town C.D."/>
            <person name="Utterback T."/>
            <person name="Van Aken S."/>
            <person name="Vaysberg M."/>
            <person name="Vysotskaia V.S."/>
            <person name="Walker M."/>
            <person name="Wu D."/>
            <person name="Yu G."/>
            <person name="Fraser C.M."/>
            <person name="Venter J.C."/>
            <person name="Davis R.W."/>
        </authorList>
    </citation>
    <scope>NUCLEOTIDE SEQUENCE [LARGE SCALE GENOMIC DNA]</scope>
    <source>
        <strain>cv. Columbia</strain>
    </source>
</reference>
<reference key="4">
    <citation type="journal article" date="2017" name="Plant J.">
        <title>Araport11: a complete reannotation of the Arabidopsis thaliana reference genome.</title>
        <authorList>
            <person name="Cheng C.Y."/>
            <person name="Krishnakumar V."/>
            <person name="Chan A.P."/>
            <person name="Thibaud-Nissen F."/>
            <person name="Schobel S."/>
            <person name="Town C.D."/>
        </authorList>
    </citation>
    <scope>GENOME REANNOTATION</scope>
    <source>
        <strain>cv. Columbia</strain>
    </source>
</reference>
<protein>
    <recommendedName>
        <fullName>Putative DNA (cytosine-5)-methyltransferase CMT1</fullName>
        <ecNumber>2.1.1.37</ecNumber>
    </recommendedName>
    <alternativeName>
        <fullName>Chromomethylase 1</fullName>
    </alternativeName>
    <alternativeName>
        <fullName>Protein CHROMOMETHYLASE 1</fullName>
    </alternativeName>
</protein>
<organism>
    <name type="scientific">Arabidopsis thaliana</name>
    <name type="common">Mouse-ear cress</name>
    <dbReference type="NCBI Taxonomy" id="3702"/>
    <lineage>
        <taxon>Eukaryota</taxon>
        <taxon>Viridiplantae</taxon>
        <taxon>Streptophyta</taxon>
        <taxon>Embryophyta</taxon>
        <taxon>Tracheophyta</taxon>
        <taxon>Spermatophyta</taxon>
        <taxon>Magnoliopsida</taxon>
        <taxon>eudicotyledons</taxon>
        <taxon>Gunneridae</taxon>
        <taxon>Pentapetalae</taxon>
        <taxon>rosids</taxon>
        <taxon>malvids</taxon>
        <taxon>Brassicales</taxon>
        <taxon>Brassicaceae</taxon>
        <taxon>Camelineae</taxon>
        <taxon>Arabidopsis</taxon>
    </lineage>
</organism>
<sequence>MAARNKQKKRAEPESDLCFAGKPMSVVESTIRWPHRYQSKKTKLQAPTKKPANKGGKKEDEEIIKQAKCHFDKALVDGVLINLNDDVYVTGLPGKLKFIAKVIELFEADDGVPYCRFRWYYRPEDTLIERFSHLVQPKRVFLSNDENDNPLTCIWSKVNIAKVPLPKITSRIEQRVIPPCDYYYDMKYEVPYLNFTSADDGSDASSSLSSDSALNCFENLHKDEKFLLDLYSGCGAMSTGFCMGASISGVKLITKWSVDINKFACDSLKLNHPETEVRNEAAEDFLALLKEWKRLCEKFSLVSSTEPVESISELEDEEVEENDDIDEASTGAELEPGEFEVEKFLGIMFGDPQGTGEKTLQLMVRWKGYNSSYDTWEPYSGLGNCKEKLKEYVIDGFKSHLLPLPGTVYTVCGGPPCQGISGYNRYRNNEAPLEDQKNQQLLVFLDIIDFLKPNYVLMENVVDLLRFSKGFLARHAVASFVAMNYQTRLGMMAAGSYGLPQLRNRVFLWAAQPSEKLPPYPLPTHEVAKKFNTPKEFKDLQVGRIQMEFLKLDNALTLADAISDLPPVTNYVANDVMDYNDAAPKTEFENFISLKRSETLLPAFGGDPTRRLFDHQPLVLGDDDLERVSYIPKQKGANYRDMPGVLVHNNKAEINPRFRAKLKSGKNVVPAYAISFIKGKSKKPFGRLWGDEIVNTVVTRAEPHNQCVIHPMQNRVLSVRENARLQGFPDCYKLCGTIKEKYIQVGNAVAVPVGVALGYAFGMASQGLTDDEPVIKLPFKYPECMQAKDQI</sequence>
<accession>O49139</accession>
<accession>O49137</accession>
<accession>O49138</accession>
<accession>O49141</accession>
<accession>O50057</accession>
<accession>O50073</accession>
<accession>Q38940</accession>
<accession>Q7G196</accession>
<gene>
    <name type="primary">CMT1</name>
    <name type="ordered locus">At1g80740</name>
    <name type="ORF">F23A5.9</name>
</gene>
<proteinExistence type="uncertain"/>
<name>CMT1_ARATH</name>
<dbReference type="EC" id="2.1.1.37"/>
<dbReference type="EMBL" id="AF039364">
    <property type="protein sequence ID" value="AAB95485.1"/>
    <property type="molecule type" value="mRNA"/>
</dbReference>
<dbReference type="EMBL" id="AF039366">
    <property type="protein sequence ID" value="AAC02659.1"/>
    <property type="molecule type" value="Genomic_DNA"/>
</dbReference>
<dbReference type="EMBL" id="AF039367">
    <property type="protein sequence ID" value="AAC02660.1"/>
    <property type="molecule type" value="Genomic_DNA"/>
</dbReference>
<dbReference type="EMBL" id="AF039368">
    <property type="protein sequence ID" value="AAC02661.1"/>
    <property type="molecule type" value="Genomic_DNA"/>
</dbReference>
<dbReference type="EMBL" id="AF039369">
    <property type="protein sequence ID" value="AAC02662.1"/>
    <property type="molecule type" value="Genomic_DNA"/>
</dbReference>
<dbReference type="EMBL" id="AF039370">
    <property type="protein sequence ID" value="AAC02663.1"/>
    <property type="molecule type" value="Genomic_DNA"/>
</dbReference>
<dbReference type="EMBL" id="AF039371">
    <property type="protein sequence ID" value="AAC02665.1"/>
    <property type="molecule type" value="Genomic_DNA"/>
</dbReference>
<dbReference type="EMBL" id="AF039372">
    <property type="protein sequence ID" value="AAC02667.1"/>
    <property type="molecule type" value="Genomic_DNA"/>
</dbReference>
<dbReference type="EMBL" id="AF039373">
    <property type="protein sequence ID" value="AAC02668.1"/>
    <property type="molecule type" value="Genomic_DNA"/>
</dbReference>
<dbReference type="EMBL" id="U53501">
    <property type="protein sequence ID" value="AAA98912.1"/>
    <property type="status" value="ALT_SEQ"/>
    <property type="molecule type" value="Genomic_DNA"/>
</dbReference>
<dbReference type="EMBL" id="AC011713">
    <property type="protein sequence ID" value="AAF14662.1"/>
    <property type="molecule type" value="Genomic_DNA"/>
</dbReference>
<dbReference type="EMBL" id="CP002684">
    <property type="protein sequence ID" value="AEE36442.1"/>
    <property type="molecule type" value="Genomic_DNA"/>
</dbReference>
<dbReference type="PIR" id="H96839">
    <property type="entry name" value="H96839"/>
</dbReference>
<dbReference type="RefSeq" id="NP_565245.1">
    <molecule id="O49139-1"/>
    <property type="nucleotide sequence ID" value="NM_106722.2"/>
</dbReference>
<dbReference type="SMR" id="O49139"/>
<dbReference type="FunCoup" id="O49139">
    <property type="interactions" value="122"/>
</dbReference>
<dbReference type="STRING" id="3702.O49139"/>
<dbReference type="REBASE" id="3261">
    <property type="entry name" value="M.AthCMT1P"/>
</dbReference>
<dbReference type="PaxDb" id="3702-AT1G80740.1"/>
<dbReference type="EnsemblPlants" id="AT1G80740.1">
    <molecule id="O49139-1"/>
    <property type="protein sequence ID" value="AT1G80740.1"/>
    <property type="gene ID" value="AT1G80740"/>
</dbReference>
<dbReference type="GeneID" id="844413"/>
<dbReference type="Gramene" id="AT1G80740.1">
    <molecule id="O49139-1"/>
    <property type="protein sequence ID" value="AT1G80740.1"/>
    <property type="gene ID" value="AT1G80740"/>
</dbReference>
<dbReference type="KEGG" id="ath:AT1G80740"/>
<dbReference type="Araport" id="AT1G80740"/>
<dbReference type="TAIR" id="AT1G80740">
    <property type="gene designation" value="CMT1"/>
</dbReference>
<dbReference type="eggNOG" id="ENOG502QW29">
    <property type="taxonomic scope" value="Eukaryota"/>
</dbReference>
<dbReference type="HOGENOM" id="CLU_004921_0_0_1"/>
<dbReference type="InParanoid" id="O49139"/>
<dbReference type="OMA" id="GEPDYIG"/>
<dbReference type="PhylomeDB" id="O49139"/>
<dbReference type="Proteomes" id="UP000006548">
    <property type="component" value="Chromosome 1"/>
</dbReference>
<dbReference type="ExpressionAtlas" id="O49139">
    <property type="expression patterns" value="baseline and differential"/>
</dbReference>
<dbReference type="GO" id="GO:0005634">
    <property type="term" value="C:nucleus"/>
    <property type="evidence" value="ECO:0007669"/>
    <property type="project" value="UniProtKB-SubCell"/>
</dbReference>
<dbReference type="GO" id="GO:0003682">
    <property type="term" value="F:chromatin binding"/>
    <property type="evidence" value="ECO:0007669"/>
    <property type="project" value="InterPro"/>
</dbReference>
<dbReference type="GO" id="GO:0003886">
    <property type="term" value="F:DNA (cytosine-5-)-methyltransferase activity"/>
    <property type="evidence" value="ECO:0007669"/>
    <property type="project" value="UniProtKB-EC"/>
</dbReference>
<dbReference type="GO" id="GO:0003677">
    <property type="term" value="F:DNA binding"/>
    <property type="evidence" value="ECO:0007669"/>
    <property type="project" value="UniProtKB-KW"/>
</dbReference>
<dbReference type="GO" id="GO:0006325">
    <property type="term" value="P:chromatin organization"/>
    <property type="evidence" value="ECO:0007669"/>
    <property type="project" value="UniProtKB-KW"/>
</dbReference>
<dbReference type="GO" id="GO:0009294">
    <property type="term" value="P:DNA-mediated transformation"/>
    <property type="evidence" value="ECO:0000315"/>
    <property type="project" value="TAIR"/>
</dbReference>
<dbReference type="GO" id="GO:0032259">
    <property type="term" value="P:methylation"/>
    <property type="evidence" value="ECO:0007669"/>
    <property type="project" value="UniProtKB-KW"/>
</dbReference>
<dbReference type="CDD" id="cd04716">
    <property type="entry name" value="BAH_plantDCM_I"/>
    <property type="match status" value="1"/>
</dbReference>
<dbReference type="CDD" id="cd18635">
    <property type="entry name" value="CD_CMT3_like"/>
    <property type="match status" value="1"/>
</dbReference>
<dbReference type="FunFam" id="3.40.50.150:FF:000523">
    <property type="entry name" value="DNA (cytosine-5)-methyltransferase CMT2"/>
    <property type="match status" value="1"/>
</dbReference>
<dbReference type="Gene3D" id="2.30.30.490">
    <property type="match status" value="1"/>
</dbReference>
<dbReference type="Gene3D" id="3.90.120.10">
    <property type="entry name" value="DNA Methylase, subunit A, domain 2"/>
    <property type="match status" value="1"/>
</dbReference>
<dbReference type="Gene3D" id="3.40.50.150">
    <property type="entry name" value="Vaccinia Virus protein VP39"/>
    <property type="match status" value="2"/>
</dbReference>
<dbReference type="InterPro" id="IPR001025">
    <property type="entry name" value="BAH_dom"/>
</dbReference>
<dbReference type="InterPro" id="IPR043151">
    <property type="entry name" value="BAH_sf"/>
</dbReference>
<dbReference type="InterPro" id="IPR050390">
    <property type="entry name" value="C5-Methyltransferase"/>
</dbReference>
<dbReference type="InterPro" id="IPR001525">
    <property type="entry name" value="C5_MeTfrase"/>
</dbReference>
<dbReference type="InterPro" id="IPR016197">
    <property type="entry name" value="Chromo-like_dom_sf"/>
</dbReference>
<dbReference type="InterPro" id="IPR000953">
    <property type="entry name" value="Chromo/chromo_shadow_dom"/>
</dbReference>
<dbReference type="InterPro" id="IPR017984">
    <property type="entry name" value="Chromo_dom_subgr"/>
</dbReference>
<dbReference type="InterPro" id="IPR023780">
    <property type="entry name" value="Chromo_domain"/>
</dbReference>
<dbReference type="InterPro" id="IPR023779">
    <property type="entry name" value="Chromodomain_CS"/>
</dbReference>
<dbReference type="InterPro" id="IPR029063">
    <property type="entry name" value="SAM-dependent_MTases_sf"/>
</dbReference>
<dbReference type="PANTHER" id="PTHR10629">
    <property type="entry name" value="CYTOSINE-SPECIFIC METHYLTRANSFERASE"/>
    <property type="match status" value="1"/>
</dbReference>
<dbReference type="PANTHER" id="PTHR10629:SF42">
    <property type="entry name" value="DNA (CYTOSINE-5)-METHYLTRANSFERASE CMT1-RELATED"/>
    <property type="match status" value="1"/>
</dbReference>
<dbReference type="Pfam" id="PF01426">
    <property type="entry name" value="BAH"/>
    <property type="match status" value="1"/>
</dbReference>
<dbReference type="Pfam" id="PF00385">
    <property type="entry name" value="Chromo"/>
    <property type="match status" value="1"/>
</dbReference>
<dbReference type="Pfam" id="PF00145">
    <property type="entry name" value="DNA_methylase"/>
    <property type="match status" value="1"/>
</dbReference>
<dbReference type="PRINTS" id="PR00105">
    <property type="entry name" value="C5METTRFRASE"/>
</dbReference>
<dbReference type="PRINTS" id="PR00504">
    <property type="entry name" value="CHROMODOMAIN"/>
</dbReference>
<dbReference type="SMART" id="SM00439">
    <property type="entry name" value="BAH"/>
    <property type="match status" value="1"/>
</dbReference>
<dbReference type="SMART" id="SM00298">
    <property type="entry name" value="CHROMO"/>
    <property type="match status" value="1"/>
</dbReference>
<dbReference type="SUPFAM" id="SSF54160">
    <property type="entry name" value="Chromo domain-like"/>
    <property type="match status" value="1"/>
</dbReference>
<dbReference type="SUPFAM" id="SSF53335">
    <property type="entry name" value="S-adenosyl-L-methionine-dependent methyltransferases"/>
    <property type="match status" value="1"/>
</dbReference>
<dbReference type="PROSITE" id="PS51038">
    <property type="entry name" value="BAH"/>
    <property type="match status" value="1"/>
</dbReference>
<dbReference type="PROSITE" id="PS00598">
    <property type="entry name" value="CHROMO_1"/>
    <property type="match status" value="1"/>
</dbReference>
<dbReference type="PROSITE" id="PS50013">
    <property type="entry name" value="CHROMO_2"/>
    <property type="match status" value="1"/>
</dbReference>
<dbReference type="PROSITE" id="PS51679">
    <property type="entry name" value="SAM_MT_C5"/>
    <property type="match status" value="1"/>
</dbReference>